<name>DB113_PANTR</name>
<reference key="1">
    <citation type="journal article" date="2005" name="Physiol. Genomics">
        <title>Cross-species analysis of the mammalian beta-defensin gene family: presence of syntenic gene clusters and preferential expression in the male reproductive tract.</title>
        <authorList>
            <person name="Patil A.A."/>
            <person name="Cai Y."/>
            <person name="Sang Y."/>
            <person name="Blecha F."/>
            <person name="Zhang G."/>
        </authorList>
    </citation>
    <scope>NUCLEOTIDE SEQUENCE [MRNA]</scope>
</reference>
<organism>
    <name type="scientific">Pan troglodytes</name>
    <name type="common">Chimpanzee</name>
    <dbReference type="NCBI Taxonomy" id="9598"/>
    <lineage>
        <taxon>Eukaryota</taxon>
        <taxon>Metazoa</taxon>
        <taxon>Chordata</taxon>
        <taxon>Craniata</taxon>
        <taxon>Vertebrata</taxon>
        <taxon>Euteleostomi</taxon>
        <taxon>Mammalia</taxon>
        <taxon>Eutheria</taxon>
        <taxon>Euarchontoglires</taxon>
        <taxon>Primates</taxon>
        <taxon>Haplorrhini</taxon>
        <taxon>Catarrhini</taxon>
        <taxon>Hominidae</taxon>
        <taxon>Pan</taxon>
    </lineage>
</organism>
<dbReference type="EMBL" id="DQ012065">
    <property type="protein sequence ID" value="AAY59796.1"/>
    <property type="molecule type" value="mRNA"/>
</dbReference>
<dbReference type="RefSeq" id="NP_001123234.1">
    <property type="nucleotide sequence ID" value="NM_001129762.1"/>
</dbReference>
<dbReference type="STRING" id="9598.ENSPTRP00000054239"/>
<dbReference type="PaxDb" id="9598-ENSPTRP00000054239"/>
<dbReference type="Ensembl" id="ENSPTRT00000061696.2">
    <property type="protein sequence ID" value="ENSPTRP00000054239.1"/>
    <property type="gene ID" value="ENSPTRG00000032456.2"/>
</dbReference>
<dbReference type="GeneID" id="740626"/>
<dbReference type="KEGG" id="ptr:740626"/>
<dbReference type="CTD" id="245927"/>
<dbReference type="VGNC" id="VGNC:2741">
    <property type="gene designation" value="DEFB113"/>
</dbReference>
<dbReference type="eggNOG" id="ENOG502TEDM">
    <property type="taxonomic scope" value="Eukaryota"/>
</dbReference>
<dbReference type="GeneTree" id="ENSGT00400000023306"/>
<dbReference type="HOGENOM" id="CLU_169780_0_0_1"/>
<dbReference type="InParanoid" id="Q30KL4"/>
<dbReference type="OMA" id="GACKPEC"/>
<dbReference type="OrthoDB" id="12890at9604"/>
<dbReference type="Proteomes" id="UP000002277">
    <property type="component" value="Chromosome 6"/>
</dbReference>
<dbReference type="GO" id="GO:0005576">
    <property type="term" value="C:extracellular region"/>
    <property type="evidence" value="ECO:0007669"/>
    <property type="project" value="UniProtKB-SubCell"/>
</dbReference>
<dbReference type="GO" id="GO:0042742">
    <property type="term" value="P:defense response to bacterium"/>
    <property type="evidence" value="ECO:0007669"/>
    <property type="project" value="UniProtKB-KW"/>
</dbReference>
<dbReference type="GO" id="GO:0045087">
    <property type="term" value="P:innate immune response"/>
    <property type="evidence" value="ECO:0007669"/>
    <property type="project" value="InterPro"/>
</dbReference>
<dbReference type="InterPro" id="IPR025933">
    <property type="entry name" value="Beta_defensin_dom"/>
</dbReference>
<dbReference type="PANTHER" id="PTHR39411">
    <property type="entry name" value="BETA-DEFENSIN 113"/>
    <property type="match status" value="1"/>
</dbReference>
<dbReference type="PANTHER" id="PTHR39411:SF1">
    <property type="entry name" value="BETA-DEFENSIN 113"/>
    <property type="match status" value="1"/>
</dbReference>
<dbReference type="Pfam" id="PF13841">
    <property type="entry name" value="Defensin_beta_2"/>
    <property type="match status" value="1"/>
</dbReference>
<comment type="function">
    <text evidence="1">Has antibacterial activity.</text>
</comment>
<comment type="subcellular location">
    <subcellularLocation>
        <location evidence="1">Secreted</location>
    </subcellularLocation>
</comment>
<comment type="similarity">
    <text evidence="3">Belongs to the beta-defensin family.</text>
</comment>
<protein>
    <recommendedName>
        <fullName>Beta-defensin 113</fullName>
    </recommendedName>
    <alternativeName>
        <fullName>Defensin, beta 113</fullName>
    </alternativeName>
</protein>
<proteinExistence type="inferred from homology"/>
<sequence length="82" mass="9630">MKILCIFLTFFFTVSCGPSVPQKKTREVAEKKRECQLVRGACKPECNSWEYVYYYCNVNPCCVVQEYQKPIINKITSKLHQK</sequence>
<gene>
    <name type="primary">DEFB113</name>
</gene>
<evidence type="ECO:0000250" key="1"/>
<evidence type="ECO:0000255" key="2"/>
<evidence type="ECO:0000305" key="3"/>
<keyword id="KW-0044">Antibiotic</keyword>
<keyword id="KW-0929">Antimicrobial</keyword>
<keyword id="KW-0211">Defensin</keyword>
<keyword id="KW-1015">Disulfide bond</keyword>
<keyword id="KW-1185">Reference proteome</keyword>
<keyword id="KW-0964">Secreted</keyword>
<keyword id="KW-0732">Signal</keyword>
<feature type="signal peptide" evidence="2">
    <location>
        <begin position="1"/>
        <end position="16"/>
    </location>
</feature>
<feature type="chain" id="PRO_0000045341" description="Beta-defensin 113">
    <location>
        <begin position="17"/>
        <end position="82"/>
    </location>
</feature>
<feature type="disulfide bond" evidence="1">
    <location>
        <begin position="35"/>
        <end position="61"/>
    </location>
</feature>
<feature type="disulfide bond" evidence="1">
    <location>
        <begin position="42"/>
        <end position="56"/>
    </location>
</feature>
<feature type="disulfide bond" evidence="1">
    <location>
        <begin position="46"/>
        <end position="62"/>
    </location>
</feature>
<accession>Q30KL4</accession>